<proteinExistence type="inferred from homology"/>
<name>PUR5_PSESM</name>
<sequence length="352" mass="36982">MSKQPSLSYKDAGVDIDAGEALVERIKSVAKRTKRPEVMGGLGGFGALCEIPAGYKQPVLVSGTDGVGTKLRLALNLNKHDTIGIDLVAMCVNDLVVCGAEPLFFLDYYATGKLNVDTAAQVVTGIGAGCELAGCSLVGGETAEMPGMYEGEDYDLAGFCVGVVEKAEIIDGSKVAAGDALLALPSSGPHSNGYSLIRKIIEVAGADIENIQLDGKPLTELLMAPTRIYVKPLLKLIKETGAVKAMAHITGGGLLDNIPRVLPEGAQAVVDVASWQRPAVFDWLQQQGNVEENEMHRVLNCGVGMVICVAQEHVDAALNVLREAGEQPWVIGQIATAAEGAAQVELKNLKAH</sequence>
<accession>Q885Y1</accession>
<comment type="catalytic activity">
    <reaction evidence="1">
        <text>2-formamido-N(1)-(5-O-phospho-beta-D-ribosyl)acetamidine + ATP = 5-amino-1-(5-phospho-beta-D-ribosyl)imidazole + ADP + phosphate + H(+)</text>
        <dbReference type="Rhea" id="RHEA:23032"/>
        <dbReference type="ChEBI" id="CHEBI:15378"/>
        <dbReference type="ChEBI" id="CHEBI:30616"/>
        <dbReference type="ChEBI" id="CHEBI:43474"/>
        <dbReference type="ChEBI" id="CHEBI:137981"/>
        <dbReference type="ChEBI" id="CHEBI:147287"/>
        <dbReference type="ChEBI" id="CHEBI:456216"/>
        <dbReference type="EC" id="6.3.3.1"/>
    </reaction>
</comment>
<comment type="pathway">
    <text evidence="1">Purine metabolism; IMP biosynthesis via de novo pathway; 5-amino-1-(5-phospho-D-ribosyl)imidazole from N(2)-formyl-N(1)-(5-phospho-D-ribosyl)glycinamide: step 2/2.</text>
</comment>
<comment type="subcellular location">
    <subcellularLocation>
        <location evidence="1">Cytoplasm</location>
    </subcellularLocation>
</comment>
<comment type="similarity">
    <text evidence="1">Belongs to the AIR synthase family.</text>
</comment>
<reference key="1">
    <citation type="journal article" date="2003" name="Proc. Natl. Acad. Sci. U.S.A.">
        <title>The complete genome sequence of the Arabidopsis and tomato pathogen Pseudomonas syringae pv. tomato DC3000.</title>
        <authorList>
            <person name="Buell C.R."/>
            <person name="Joardar V."/>
            <person name="Lindeberg M."/>
            <person name="Selengut J."/>
            <person name="Paulsen I.T."/>
            <person name="Gwinn M.L."/>
            <person name="Dodson R.J."/>
            <person name="DeBoy R.T."/>
            <person name="Durkin A.S."/>
            <person name="Kolonay J.F."/>
            <person name="Madupu R."/>
            <person name="Daugherty S.C."/>
            <person name="Brinkac L.M."/>
            <person name="Beanan M.J."/>
            <person name="Haft D.H."/>
            <person name="Nelson W.C."/>
            <person name="Davidsen T.M."/>
            <person name="Zafar N."/>
            <person name="Zhou L."/>
            <person name="Liu J."/>
            <person name="Yuan Q."/>
            <person name="Khouri H.M."/>
            <person name="Fedorova N.B."/>
            <person name="Tran B."/>
            <person name="Russell D."/>
            <person name="Berry K.J."/>
            <person name="Utterback T.R."/>
            <person name="Van Aken S.E."/>
            <person name="Feldblyum T.V."/>
            <person name="D'Ascenzo M."/>
            <person name="Deng W.-L."/>
            <person name="Ramos A.R."/>
            <person name="Alfano J.R."/>
            <person name="Cartinhour S."/>
            <person name="Chatterjee A.K."/>
            <person name="Delaney T.P."/>
            <person name="Lazarowitz S.G."/>
            <person name="Martin G.B."/>
            <person name="Schneider D.J."/>
            <person name="Tang X."/>
            <person name="Bender C.L."/>
            <person name="White O."/>
            <person name="Fraser C.M."/>
            <person name="Collmer A."/>
        </authorList>
    </citation>
    <scope>NUCLEOTIDE SEQUENCE [LARGE SCALE GENOMIC DNA]</scope>
    <source>
        <strain>ATCC BAA-871 / DC3000</strain>
    </source>
</reference>
<evidence type="ECO:0000255" key="1">
    <source>
        <dbReference type="HAMAP-Rule" id="MF_00741"/>
    </source>
</evidence>
<organism>
    <name type="scientific">Pseudomonas syringae pv. tomato (strain ATCC BAA-871 / DC3000)</name>
    <dbReference type="NCBI Taxonomy" id="223283"/>
    <lineage>
        <taxon>Bacteria</taxon>
        <taxon>Pseudomonadati</taxon>
        <taxon>Pseudomonadota</taxon>
        <taxon>Gammaproteobacteria</taxon>
        <taxon>Pseudomonadales</taxon>
        <taxon>Pseudomonadaceae</taxon>
        <taxon>Pseudomonas</taxon>
    </lineage>
</organism>
<dbReference type="EC" id="6.3.3.1" evidence="1"/>
<dbReference type="EMBL" id="AE016853">
    <property type="protein sequence ID" value="AAO55220.1"/>
    <property type="molecule type" value="Genomic_DNA"/>
</dbReference>
<dbReference type="RefSeq" id="NP_791525.1">
    <property type="nucleotide sequence ID" value="NC_004578.1"/>
</dbReference>
<dbReference type="RefSeq" id="WP_003381585.1">
    <property type="nucleotide sequence ID" value="NC_004578.1"/>
</dbReference>
<dbReference type="SMR" id="Q885Y1"/>
<dbReference type="STRING" id="223283.PSPTO_1700"/>
<dbReference type="GeneID" id="1183337"/>
<dbReference type="KEGG" id="pst:PSPTO_1700"/>
<dbReference type="PATRIC" id="fig|223283.9.peg.1727"/>
<dbReference type="eggNOG" id="COG0150">
    <property type="taxonomic scope" value="Bacteria"/>
</dbReference>
<dbReference type="HOGENOM" id="CLU_047116_0_0_6"/>
<dbReference type="OrthoDB" id="9777881at2"/>
<dbReference type="PhylomeDB" id="Q885Y1"/>
<dbReference type="UniPathway" id="UPA00074">
    <property type="reaction ID" value="UER00129"/>
</dbReference>
<dbReference type="Proteomes" id="UP000002515">
    <property type="component" value="Chromosome"/>
</dbReference>
<dbReference type="GO" id="GO:0005829">
    <property type="term" value="C:cytosol"/>
    <property type="evidence" value="ECO:0007669"/>
    <property type="project" value="TreeGrafter"/>
</dbReference>
<dbReference type="GO" id="GO:0005524">
    <property type="term" value="F:ATP binding"/>
    <property type="evidence" value="ECO:0007669"/>
    <property type="project" value="UniProtKB-KW"/>
</dbReference>
<dbReference type="GO" id="GO:0004637">
    <property type="term" value="F:phosphoribosylamine-glycine ligase activity"/>
    <property type="evidence" value="ECO:0007669"/>
    <property type="project" value="TreeGrafter"/>
</dbReference>
<dbReference type="GO" id="GO:0004641">
    <property type="term" value="F:phosphoribosylformylglycinamidine cyclo-ligase activity"/>
    <property type="evidence" value="ECO:0007669"/>
    <property type="project" value="UniProtKB-UniRule"/>
</dbReference>
<dbReference type="GO" id="GO:0006189">
    <property type="term" value="P:'de novo' IMP biosynthetic process"/>
    <property type="evidence" value="ECO:0007669"/>
    <property type="project" value="UniProtKB-UniRule"/>
</dbReference>
<dbReference type="GO" id="GO:0046084">
    <property type="term" value="P:adenine biosynthetic process"/>
    <property type="evidence" value="ECO:0007669"/>
    <property type="project" value="TreeGrafter"/>
</dbReference>
<dbReference type="CDD" id="cd02196">
    <property type="entry name" value="PurM"/>
    <property type="match status" value="1"/>
</dbReference>
<dbReference type="FunFam" id="3.30.1330.10:FF:000001">
    <property type="entry name" value="Phosphoribosylformylglycinamidine cyclo-ligase"/>
    <property type="match status" value="1"/>
</dbReference>
<dbReference type="FunFam" id="3.90.650.10:FF:000001">
    <property type="entry name" value="Phosphoribosylformylglycinamidine cyclo-ligase"/>
    <property type="match status" value="1"/>
</dbReference>
<dbReference type="Gene3D" id="3.90.650.10">
    <property type="entry name" value="PurM-like C-terminal domain"/>
    <property type="match status" value="1"/>
</dbReference>
<dbReference type="Gene3D" id="3.30.1330.10">
    <property type="entry name" value="PurM-like, N-terminal domain"/>
    <property type="match status" value="1"/>
</dbReference>
<dbReference type="HAMAP" id="MF_00741">
    <property type="entry name" value="AIRS"/>
    <property type="match status" value="1"/>
</dbReference>
<dbReference type="InterPro" id="IPR010918">
    <property type="entry name" value="PurM-like_C_dom"/>
</dbReference>
<dbReference type="InterPro" id="IPR036676">
    <property type="entry name" value="PurM-like_C_sf"/>
</dbReference>
<dbReference type="InterPro" id="IPR016188">
    <property type="entry name" value="PurM-like_N"/>
</dbReference>
<dbReference type="InterPro" id="IPR036921">
    <property type="entry name" value="PurM-like_N_sf"/>
</dbReference>
<dbReference type="InterPro" id="IPR004733">
    <property type="entry name" value="PurM_cligase"/>
</dbReference>
<dbReference type="NCBIfam" id="TIGR00878">
    <property type="entry name" value="purM"/>
    <property type="match status" value="1"/>
</dbReference>
<dbReference type="PANTHER" id="PTHR10520:SF12">
    <property type="entry name" value="TRIFUNCTIONAL PURINE BIOSYNTHETIC PROTEIN ADENOSINE-3"/>
    <property type="match status" value="1"/>
</dbReference>
<dbReference type="PANTHER" id="PTHR10520">
    <property type="entry name" value="TRIFUNCTIONAL PURINE BIOSYNTHETIC PROTEIN ADENOSINE-3-RELATED"/>
    <property type="match status" value="1"/>
</dbReference>
<dbReference type="Pfam" id="PF00586">
    <property type="entry name" value="AIRS"/>
    <property type="match status" value="1"/>
</dbReference>
<dbReference type="Pfam" id="PF02769">
    <property type="entry name" value="AIRS_C"/>
    <property type="match status" value="1"/>
</dbReference>
<dbReference type="SUPFAM" id="SSF56042">
    <property type="entry name" value="PurM C-terminal domain-like"/>
    <property type="match status" value="1"/>
</dbReference>
<dbReference type="SUPFAM" id="SSF55326">
    <property type="entry name" value="PurM N-terminal domain-like"/>
    <property type="match status" value="1"/>
</dbReference>
<feature type="chain" id="PRO_0000148235" description="Phosphoribosylformylglycinamidine cyclo-ligase">
    <location>
        <begin position="1"/>
        <end position="352"/>
    </location>
</feature>
<keyword id="KW-0067">ATP-binding</keyword>
<keyword id="KW-0963">Cytoplasm</keyword>
<keyword id="KW-0436">Ligase</keyword>
<keyword id="KW-0547">Nucleotide-binding</keyword>
<keyword id="KW-0658">Purine biosynthesis</keyword>
<keyword id="KW-1185">Reference proteome</keyword>
<gene>
    <name evidence="1" type="primary">purM</name>
    <name type="ordered locus">PSPTO_1700</name>
</gene>
<protein>
    <recommendedName>
        <fullName evidence="1">Phosphoribosylformylglycinamidine cyclo-ligase</fullName>
        <ecNumber evidence="1">6.3.3.1</ecNumber>
    </recommendedName>
    <alternativeName>
        <fullName evidence="1">AIR synthase</fullName>
    </alternativeName>
    <alternativeName>
        <fullName evidence="1">AIRS</fullName>
    </alternativeName>
    <alternativeName>
        <fullName evidence="1">Phosphoribosyl-aminoimidazole synthetase</fullName>
    </alternativeName>
</protein>